<sequence>MEELIAIVGPTAVGKTELAVAWARRINGEIVSADSRQIYRWMDIGTAKPSPEEQAQAPHHLIDIRDPDQPFSLAEFCDLATAAIADIRGRGRIPLLVGGTGQYLAAFLEGWQVPRVAPQPDLRAELELIAAREGPAVLHARLAAVDPVAASRIPPTNVRRVVRALEVYLVSGEPISRLQERKEPPFRPRTIWLHRPRAELYARADARIERMIAAGLVEEVAGLLARGYDWSLPAMSSLGYIQFRPYFTGEADLPTCIERLRFDTHAFIRRQEMWFRRLPNLEIWTPDHPSWREITA</sequence>
<proteinExistence type="inferred from homology"/>
<protein>
    <recommendedName>
        <fullName evidence="1">tRNA dimethylallyltransferase</fullName>
        <ecNumber evidence="1">2.5.1.75</ecNumber>
    </recommendedName>
    <alternativeName>
        <fullName evidence="1">Dimethylallyl diphosphate:tRNA dimethylallyltransferase</fullName>
        <shortName evidence="1">DMAPP:tRNA dimethylallyltransferase</shortName>
        <shortName evidence="1">DMATase</shortName>
    </alternativeName>
    <alternativeName>
        <fullName evidence="1">Isopentenyl-diphosphate:tRNA isopentenyltransferase</fullName>
        <shortName evidence="1">IPP transferase</shortName>
        <shortName evidence="1">IPPT</shortName>
        <shortName evidence="1">IPTase</shortName>
    </alternativeName>
</protein>
<reference key="1">
    <citation type="journal article" date="2011" name="BMC Genomics">
        <title>Complete genome sequence of the filamentous anoxygenic phototrophic bacterium Chloroflexus aurantiacus.</title>
        <authorList>
            <person name="Tang K.H."/>
            <person name="Barry K."/>
            <person name="Chertkov O."/>
            <person name="Dalin E."/>
            <person name="Han C.S."/>
            <person name="Hauser L.J."/>
            <person name="Honchak B.M."/>
            <person name="Karbach L.E."/>
            <person name="Land M.L."/>
            <person name="Lapidus A."/>
            <person name="Larimer F.W."/>
            <person name="Mikhailova N."/>
            <person name="Pitluck S."/>
            <person name="Pierson B.K."/>
            <person name="Blankenship R.E."/>
        </authorList>
    </citation>
    <scope>NUCLEOTIDE SEQUENCE [LARGE SCALE GENOMIC DNA]</scope>
    <source>
        <strain>ATCC 29366 / DSM 635 / J-10-fl</strain>
    </source>
</reference>
<comment type="function">
    <text evidence="1">Catalyzes the transfer of a dimethylallyl group onto the adenine at position 37 in tRNAs that read codons beginning with uridine, leading to the formation of N6-(dimethylallyl)adenosine (i(6)A).</text>
</comment>
<comment type="catalytic activity">
    <reaction evidence="1">
        <text>adenosine(37) in tRNA + dimethylallyl diphosphate = N(6)-dimethylallyladenosine(37) in tRNA + diphosphate</text>
        <dbReference type="Rhea" id="RHEA:26482"/>
        <dbReference type="Rhea" id="RHEA-COMP:10162"/>
        <dbReference type="Rhea" id="RHEA-COMP:10375"/>
        <dbReference type="ChEBI" id="CHEBI:33019"/>
        <dbReference type="ChEBI" id="CHEBI:57623"/>
        <dbReference type="ChEBI" id="CHEBI:74411"/>
        <dbReference type="ChEBI" id="CHEBI:74415"/>
        <dbReference type="EC" id="2.5.1.75"/>
    </reaction>
</comment>
<comment type="cofactor">
    <cofactor evidence="1">
        <name>Mg(2+)</name>
        <dbReference type="ChEBI" id="CHEBI:18420"/>
    </cofactor>
</comment>
<comment type="subunit">
    <text evidence="1">Monomer.</text>
</comment>
<comment type="similarity">
    <text evidence="1">Belongs to the IPP transferase family.</text>
</comment>
<dbReference type="EC" id="2.5.1.75" evidence="1"/>
<dbReference type="EMBL" id="CP000909">
    <property type="protein sequence ID" value="ABY33602.1"/>
    <property type="molecule type" value="Genomic_DNA"/>
</dbReference>
<dbReference type="RefSeq" id="WP_012256258.1">
    <property type="nucleotide sequence ID" value="NC_010175.1"/>
</dbReference>
<dbReference type="RefSeq" id="YP_001633991.1">
    <property type="nucleotide sequence ID" value="NC_010175.1"/>
</dbReference>
<dbReference type="SMR" id="A9WDJ6"/>
<dbReference type="FunCoup" id="A9WDJ6">
    <property type="interactions" value="493"/>
</dbReference>
<dbReference type="STRING" id="324602.Caur_0351"/>
<dbReference type="EnsemblBacteria" id="ABY33602">
    <property type="protein sequence ID" value="ABY33602"/>
    <property type="gene ID" value="Caur_0351"/>
</dbReference>
<dbReference type="KEGG" id="cau:Caur_0351"/>
<dbReference type="PATRIC" id="fig|324602.8.peg.402"/>
<dbReference type="eggNOG" id="COG0324">
    <property type="taxonomic scope" value="Bacteria"/>
</dbReference>
<dbReference type="HOGENOM" id="CLU_032616_0_1_0"/>
<dbReference type="InParanoid" id="A9WDJ6"/>
<dbReference type="Proteomes" id="UP000002008">
    <property type="component" value="Chromosome"/>
</dbReference>
<dbReference type="GO" id="GO:0005524">
    <property type="term" value="F:ATP binding"/>
    <property type="evidence" value="ECO:0007669"/>
    <property type="project" value="UniProtKB-UniRule"/>
</dbReference>
<dbReference type="GO" id="GO:0052381">
    <property type="term" value="F:tRNA dimethylallyltransferase activity"/>
    <property type="evidence" value="ECO:0000318"/>
    <property type="project" value="GO_Central"/>
</dbReference>
<dbReference type="GO" id="GO:0006400">
    <property type="term" value="P:tRNA modification"/>
    <property type="evidence" value="ECO:0000318"/>
    <property type="project" value="GO_Central"/>
</dbReference>
<dbReference type="FunFam" id="1.10.20.140:FF:000001">
    <property type="entry name" value="tRNA dimethylallyltransferase"/>
    <property type="match status" value="1"/>
</dbReference>
<dbReference type="Gene3D" id="1.10.20.140">
    <property type="match status" value="1"/>
</dbReference>
<dbReference type="Gene3D" id="3.40.50.300">
    <property type="entry name" value="P-loop containing nucleotide triphosphate hydrolases"/>
    <property type="match status" value="1"/>
</dbReference>
<dbReference type="HAMAP" id="MF_00185">
    <property type="entry name" value="IPP_trans"/>
    <property type="match status" value="1"/>
</dbReference>
<dbReference type="InterPro" id="IPR039657">
    <property type="entry name" value="Dimethylallyltransferase"/>
</dbReference>
<dbReference type="InterPro" id="IPR018022">
    <property type="entry name" value="IPT"/>
</dbReference>
<dbReference type="InterPro" id="IPR027417">
    <property type="entry name" value="P-loop_NTPase"/>
</dbReference>
<dbReference type="NCBIfam" id="TIGR00174">
    <property type="entry name" value="miaA"/>
    <property type="match status" value="1"/>
</dbReference>
<dbReference type="PANTHER" id="PTHR11088">
    <property type="entry name" value="TRNA DIMETHYLALLYLTRANSFERASE"/>
    <property type="match status" value="1"/>
</dbReference>
<dbReference type="PANTHER" id="PTHR11088:SF60">
    <property type="entry name" value="TRNA DIMETHYLALLYLTRANSFERASE"/>
    <property type="match status" value="1"/>
</dbReference>
<dbReference type="Pfam" id="PF01715">
    <property type="entry name" value="IPPT"/>
    <property type="match status" value="1"/>
</dbReference>
<dbReference type="SUPFAM" id="SSF52540">
    <property type="entry name" value="P-loop containing nucleoside triphosphate hydrolases"/>
    <property type="match status" value="2"/>
</dbReference>
<organism>
    <name type="scientific">Chloroflexus aurantiacus (strain ATCC 29366 / DSM 635 / J-10-fl)</name>
    <dbReference type="NCBI Taxonomy" id="324602"/>
    <lineage>
        <taxon>Bacteria</taxon>
        <taxon>Bacillati</taxon>
        <taxon>Chloroflexota</taxon>
        <taxon>Chloroflexia</taxon>
        <taxon>Chloroflexales</taxon>
        <taxon>Chloroflexineae</taxon>
        <taxon>Chloroflexaceae</taxon>
        <taxon>Chloroflexus</taxon>
    </lineage>
</organism>
<keyword id="KW-0067">ATP-binding</keyword>
<keyword id="KW-0460">Magnesium</keyword>
<keyword id="KW-0547">Nucleotide-binding</keyword>
<keyword id="KW-1185">Reference proteome</keyword>
<keyword id="KW-0808">Transferase</keyword>
<keyword id="KW-0819">tRNA processing</keyword>
<evidence type="ECO:0000255" key="1">
    <source>
        <dbReference type="HAMAP-Rule" id="MF_00185"/>
    </source>
</evidence>
<feature type="chain" id="PRO_1000077390" description="tRNA dimethylallyltransferase">
    <location>
        <begin position="1"/>
        <end position="296"/>
    </location>
</feature>
<feature type="region of interest" description="Interaction with substrate tRNA" evidence="1">
    <location>
        <begin position="34"/>
        <end position="37"/>
    </location>
</feature>
<feature type="binding site" evidence="1">
    <location>
        <begin position="9"/>
        <end position="16"/>
    </location>
    <ligand>
        <name>ATP</name>
        <dbReference type="ChEBI" id="CHEBI:30616"/>
    </ligand>
</feature>
<feature type="binding site" evidence="1">
    <location>
        <begin position="11"/>
        <end position="16"/>
    </location>
    <ligand>
        <name>substrate</name>
    </ligand>
</feature>
<feature type="site" description="Interaction with substrate tRNA" evidence="1">
    <location>
        <position position="100"/>
    </location>
</feature>
<feature type="site" description="Interaction with substrate tRNA" evidence="1">
    <location>
        <position position="123"/>
    </location>
</feature>
<accession>A9WDJ6</accession>
<gene>
    <name evidence="1" type="primary">miaA</name>
    <name type="ordered locus">Caur_0351</name>
</gene>
<name>MIAA_CHLAA</name>